<protein>
    <recommendedName>
        <fullName evidence="1">ATP-dependent dethiobiotin synthetase BioD</fullName>
        <ecNumber evidence="1">6.3.3.3</ecNumber>
    </recommendedName>
    <alternativeName>
        <fullName evidence="1">DTB synthetase</fullName>
        <shortName evidence="1">DTBS</shortName>
    </alternativeName>
    <alternativeName>
        <fullName evidence="1">Dethiobiotin synthase</fullName>
    </alternativeName>
</protein>
<sequence>MTAPLSVFVTGTDTEIGKTFVSAAMLHGFARHGLRAAALKPVAAGAYERDGVWRNEDADQLDAAANVALPPELRTPFLLKAPAAPHIVAAQEGVTLDLDTIVACHREALTRADVVVVEGVGGFRVPLNDTQDTADLAVALGLPVVLVVGVRLGCISHALLTADAIRQRGLTLAGWVANHVDPAMSFADENVATIRDWLAREHRAPLIGRIAHMTPAAPESAAAMLDIAALVESLRTARR</sequence>
<keyword id="KW-0067">ATP-binding</keyword>
<keyword id="KW-0093">Biotin biosynthesis</keyword>
<keyword id="KW-0963">Cytoplasm</keyword>
<keyword id="KW-0436">Ligase</keyword>
<keyword id="KW-0460">Magnesium</keyword>
<keyword id="KW-0479">Metal-binding</keyword>
<keyword id="KW-0547">Nucleotide-binding</keyword>
<reference key="1">
    <citation type="submission" date="2006-08" db="EMBL/GenBank/DDBJ databases">
        <title>Complete sequence of chromosome 1 of Burkholderia cenocepacia HI2424.</title>
        <authorList>
            <person name="Copeland A."/>
            <person name="Lucas S."/>
            <person name="Lapidus A."/>
            <person name="Barry K."/>
            <person name="Detter J.C."/>
            <person name="Glavina del Rio T."/>
            <person name="Hammon N."/>
            <person name="Israni S."/>
            <person name="Pitluck S."/>
            <person name="Chain P."/>
            <person name="Malfatti S."/>
            <person name="Shin M."/>
            <person name="Vergez L."/>
            <person name="Schmutz J."/>
            <person name="Larimer F."/>
            <person name="Land M."/>
            <person name="Hauser L."/>
            <person name="Kyrpides N."/>
            <person name="Kim E."/>
            <person name="LiPuma J.J."/>
            <person name="Gonzalez C.F."/>
            <person name="Konstantinidis K."/>
            <person name="Tiedje J.M."/>
            <person name="Richardson P."/>
        </authorList>
    </citation>
    <scope>NUCLEOTIDE SEQUENCE [LARGE SCALE GENOMIC DNA]</scope>
    <source>
        <strain>HI2424</strain>
    </source>
</reference>
<feature type="chain" id="PRO_0000302487" description="ATP-dependent dethiobiotin synthetase BioD">
    <location>
        <begin position="1"/>
        <end position="239"/>
    </location>
</feature>
<feature type="active site" evidence="1">
    <location>
        <position position="40"/>
    </location>
</feature>
<feature type="binding site" evidence="1">
    <location>
        <begin position="15"/>
        <end position="20"/>
    </location>
    <ligand>
        <name>ATP</name>
        <dbReference type="ChEBI" id="CHEBI:30616"/>
    </ligand>
</feature>
<feature type="binding site" evidence="1">
    <location>
        <position position="19"/>
    </location>
    <ligand>
        <name>Mg(2+)</name>
        <dbReference type="ChEBI" id="CHEBI:18420"/>
    </ligand>
</feature>
<feature type="binding site" evidence="1">
    <location>
        <position position="57"/>
    </location>
    <ligand>
        <name>ATP</name>
        <dbReference type="ChEBI" id="CHEBI:30616"/>
    </ligand>
</feature>
<feature type="binding site" evidence="1">
    <location>
        <position position="57"/>
    </location>
    <ligand>
        <name>Mg(2+)</name>
        <dbReference type="ChEBI" id="CHEBI:18420"/>
    </ligand>
</feature>
<feature type="binding site" evidence="1">
    <location>
        <begin position="118"/>
        <end position="121"/>
    </location>
    <ligand>
        <name>ATP</name>
        <dbReference type="ChEBI" id="CHEBI:30616"/>
    </ligand>
</feature>
<feature type="binding site" evidence="1">
    <location>
        <position position="118"/>
    </location>
    <ligand>
        <name>Mg(2+)</name>
        <dbReference type="ChEBI" id="CHEBI:18420"/>
    </ligand>
</feature>
<feature type="binding site" evidence="1">
    <location>
        <begin position="178"/>
        <end position="179"/>
    </location>
    <ligand>
        <name>ATP</name>
        <dbReference type="ChEBI" id="CHEBI:30616"/>
    </ligand>
</feature>
<evidence type="ECO:0000255" key="1">
    <source>
        <dbReference type="HAMAP-Rule" id="MF_00336"/>
    </source>
</evidence>
<proteinExistence type="inferred from homology"/>
<comment type="function">
    <text evidence="1">Catalyzes a mechanistically unusual reaction, the ATP-dependent insertion of CO2 between the N7 and N8 nitrogen atoms of 7,8-diaminopelargonic acid (DAPA, also called 7,8-diammoniononanoate) to form a ureido ring.</text>
</comment>
<comment type="catalytic activity">
    <reaction evidence="1">
        <text>(7R,8S)-7,8-diammoniononanoate + CO2 + ATP = (4R,5S)-dethiobiotin + ADP + phosphate + 3 H(+)</text>
        <dbReference type="Rhea" id="RHEA:15805"/>
        <dbReference type="ChEBI" id="CHEBI:15378"/>
        <dbReference type="ChEBI" id="CHEBI:16526"/>
        <dbReference type="ChEBI" id="CHEBI:30616"/>
        <dbReference type="ChEBI" id="CHEBI:43474"/>
        <dbReference type="ChEBI" id="CHEBI:149469"/>
        <dbReference type="ChEBI" id="CHEBI:149473"/>
        <dbReference type="ChEBI" id="CHEBI:456216"/>
        <dbReference type="EC" id="6.3.3.3"/>
    </reaction>
</comment>
<comment type="cofactor">
    <cofactor evidence="1">
        <name>Mg(2+)</name>
        <dbReference type="ChEBI" id="CHEBI:18420"/>
    </cofactor>
</comment>
<comment type="pathway">
    <text evidence="1">Cofactor biosynthesis; biotin biosynthesis; biotin from 7,8-diaminononanoate: step 1/2.</text>
</comment>
<comment type="subunit">
    <text evidence="1">Homodimer.</text>
</comment>
<comment type="subcellular location">
    <subcellularLocation>
        <location evidence="1">Cytoplasm</location>
    </subcellularLocation>
</comment>
<comment type="similarity">
    <text evidence="1">Belongs to the dethiobiotin synthetase family.</text>
</comment>
<name>BIOD_BURCH</name>
<dbReference type="EC" id="6.3.3.3" evidence="1"/>
<dbReference type="EMBL" id="CP000458">
    <property type="protein sequence ID" value="ABK09681.1"/>
    <property type="molecule type" value="Genomic_DNA"/>
</dbReference>
<dbReference type="RefSeq" id="WP_011546340.1">
    <property type="nucleotide sequence ID" value="NC_008542.1"/>
</dbReference>
<dbReference type="SMR" id="A0KB04"/>
<dbReference type="KEGG" id="bch:Bcen2424_2933"/>
<dbReference type="HOGENOM" id="CLU_072551_0_0_4"/>
<dbReference type="UniPathway" id="UPA00078">
    <property type="reaction ID" value="UER00161"/>
</dbReference>
<dbReference type="GO" id="GO:0005829">
    <property type="term" value="C:cytosol"/>
    <property type="evidence" value="ECO:0007669"/>
    <property type="project" value="TreeGrafter"/>
</dbReference>
<dbReference type="GO" id="GO:0005524">
    <property type="term" value="F:ATP binding"/>
    <property type="evidence" value="ECO:0007669"/>
    <property type="project" value="UniProtKB-UniRule"/>
</dbReference>
<dbReference type="GO" id="GO:0004141">
    <property type="term" value="F:dethiobiotin synthase activity"/>
    <property type="evidence" value="ECO:0007669"/>
    <property type="project" value="UniProtKB-UniRule"/>
</dbReference>
<dbReference type="GO" id="GO:0000287">
    <property type="term" value="F:magnesium ion binding"/>
    <property type="evidence" value="ECO:0007669"/>
    <property type="project" value="UniProtKB-UniRule"/>
</dbReference>
<dbReference type="GO" id="GO:0009102">
    <property type="term" value="P:biotin biosynthetic process"/>
    <property type="evidence" value="ECO:0007669"/>
    <property type="project" value="UniProtKB-UniRule"/>
</dbReference>
<dbReference type="CDD" id="cd03109">
    <property type="entry name" value="DTBS"/>
    <property type="match status" value="1"/>
</dbReference>
<dbReference type="FunFam" id="3.40.50.300:FF:000292">
    <property type="entry name" value="ATP-dependent dethiobiotin synthetase BioD"/>
    <property type="match status" value="1"/>
</dbReference>
<dbReference type="Gene3D" id="3.40.50.300">
    <property type="entry name" value="P-loop containing nucleotide triphosphate hydrolases"/>
    <property type="match status" value="1"/>
</dbReference>
<dbReference type="HAMAP" id="MF_00336">
    <property type="entry name" value="BioD"/>
    <property type="match status" value="1"/>
</dbReference>
<dbReference type="InterPro" id="IPR004472">
    <property type="entry name" value="DTB_synth_BioD"/>
</dbReference>
<dbReference type="InterPro" id="IPR027417">
    <property type="entry name" value="P-loop_NTPase"/>
</dbReference>
<dbReference type="NCBIfam" id="TIGR00347">
    <property type="entry name" value="bioD"/>
    <property type="match status" value="1"/>
</dbReference>
<dbReference type="PANTHER" id="PTHR43210">
    <property type="entry name" value="DETHIOBIOTIN SYNTHETASE"/>
    <property type="match status" value="1"/>
</dbReference>
<dbReference type="PANTHER" id="PTHR43210:SF5">
    <property type="entry name" value="DETHIOBIOTIN SYNTHETASE"/>
    <property type="match status" value="1"/>
</dbReference>
<dbReference type="Pfam" id="PF13500">
    <property type="entry name" value="AAA_26"/>
    <property type="match status" value="1"/>
</dbReference>
<dbReference type="PIRSF" id="PIRSF006755">
    <property type="entry name" value="DTB_synth"/>
    <property type="match status" value="1"/>
</dbReference>
<dbReference type="SUPFAM" id="SSF52540">
    <property type="entry name" value="P-loop containing nucleoside triphosphate hydrolases"/>
    <property type="match status" value="1"/>
</dbReference>
<gene>
    <name evidence="1" type="primary">bioD</name>
    <name type="ordered locus">Bcen2424_2933</name>
</gene>
<organism>
    <name type="scientific">Burkholderia cenocepacia (strain HI2424)</name>
    <dbReference type="NCBI Taxonomy" id="331272"/>
    <lineage>
        <taxon>Bacteria</taxon>
        <taxon>Pseudomonadati</taxon>
        <taxon>Pseudomonadota</taxon>
        <taxon>Betaproteobacteria</taxon>
        <taxon>Burkholderiales</taxon>
        <taxon>Burkholderiaceae</taxon>
        <taxon>Burkholderia</taxon>
        <taxon>Burkholderia cepacia complex</taxon>
    </lineage>
</organism>
<accession>A0KB04</accession>